<organism>
    <name type="scientific">Ectopseudomonas mendocina (strain ymp)</name>
    <name type="common">Pseudomonas mendocina</name>
    <dbReference type="NCBI Taxonomy" id="399739"/>
    <lineage>
        <taxon>Bacteria</taxon>
        <taxon>Pseudomonadati</taxon>
        <taxon>Pseudomonadota</taxon>
        <taxon>Gammaproteobacteria</taxon>
        <taxon>Pseudomonadales</taxon>
        <taxon>Pseudomonadaceae</taxon>
        <taxon>Ectopseudomonas</taxon>
    </lineage>
</organism>
<dbReference type="EC" id="2.7.7.6" evidence="1"/>
<dbReference type="EMBL" id="CP000680">
    <property type="protein sequence ID" value="ABP87136.1"/>
    <property type="molecule type" value="Genomic_DNA"/>
</dbReference>
<dbReference type="SMR" id="A4Y0M0"/>
<dbReference type="STRING" id="399739.Pmen_4389"/>
<dbReference type="KEGG" id="pmy:Pmen_4389"/>
<dbReference type="eggNOG" id="COG1758">
    <property type="taxonomic scope" value="Bacteria"/>
</dbReference>
<dbReference type="HOGENOM" id="CLU_125406_5_2_6"/>
<dbReference type="OrthoDB" id="9796300at2"/>
<dbReference type="GO" id="GO:0000428">
    <property type="term" value="C:DNA-directed RNA polymerase complex"/>
    <property type="evidence" value="ECO:0007669"/>
    <property type="project" value="UniProtKB-KW"/>
</dbReference>
<dbReference type="GO" id="GO:0003677">
    <property type="term" value="F:DNA binding"/>
    <property type="evidence" value="ECO:0007669"/>
    <property type="project" value="UniProtKB-UniRule"/>
</dbReference>
<dbReference type="GO" id="GO:0003899">
    <property type="term" value="F:DNA-directed RNA polymerase activity"/>
    <property type="evidence" value="ECO:0007669"/>
    <property type="project" value="UniProtKB-UniRule"/>
</dbReference>
<dbReference type="GO" id="GO:0006351">
    <property type="term" value="P:DNA-templated transcription"/>
    <property type="evidence" value="ECO:0007669"/>
    <property type="project" value="UniProtKB-UniRule"/>
</dbReference>
<dbReference type="Gene3D" id="3.90.940.10">
    <property type="match status" value="1"/>
</dbReference>
<dbReference type="HAMAP" id="MF_00366">
    <property type="entry name" value="RNApol_bact_RpoZ"/>
    <property type="match status" value="1"/>
</dbReference>
<dbReference type="InterPro" id="IPR003716">
    <property type="entry name" value="DNA-dir_RNA_pol_omega"/>
</dbReference>
<dbReference type="InterPro" id="IPR006110">
    <property type="entry name" value="Pol_omega/Rpo6/RPB6"/>
</dbReference>
<dbReference type="InterPro" id="IPR036161">
    <property type="entry name" value="RPB6/omega-like_sf"/>
</dbReference>
<dbReference type="NCBIfam" id="TIGR00690">
    <property type="entry name" value="rpoZ"/>
    <property type="match status" value="1"/>
</dbReference>
<dbReference type="PANTHER" id="PTHR34476">
    <property type="entry name" value="DNA-DIRECTED RNA POLYMERASE SUBUNIT OMEGA"/>
    <property type="match status" value="1"/>
</dbReference>
<dbReference type="PANTHER" id="PTHR34476:SF1">
    <property type="entry name" value="DNA-DIRECTED RNA POLYMERASE SUBUNIT OMEGA"/>
    <property type="match status" value="1"/>
</dbReference>
<dbReference type="Pfam" id="PF01192">
    <property type="entry name" value="RNA_pol_Rpb6"/>
    <property type="match status" value="1"/>
</dbReference>
<dbReference type="SMART" id="SM01409">
    <property type="entry name" value="RNA_pol_Rpb6"/>
    <property type="match status" value="1"/>
</dbReference>
<dbReference type="SUPFAM" id="SSF63562">
    <property type="entry name" value="RPB6/omega subunit-like"/>
    <property type="match status" value="1"/>
</dbReference>
<accession>A4Y0M0</accession>
<keyword id="KW-0240">DNA-directed RNA polymerase</keyword>
<keyword id="KW-0548">Nucleotidyltransferase</keyword>
<keyword id="KW-0804">Transcription</keyword>
<keyword id="KW-0808">Transferase</keyword>
<reference key="1">
    <citation type="submission" date="2007-04" db="EMBL/GenBank/DDBJ databases">
        <title>Complete sequence of Pseudomonas mendocina ymp.</title>
        <authorList>
            <consortium name="US DOE Joint Genome Institute"/>
            <person name="Copeland A."/>
            <person name="Lucas S."/>
            <person name="Lapidus A."/>
            <person name="Barry K."/>
            <person name="Glavina del Rio T."/>
            <person name="Dalin E."/>
            <person name="Tice H."/>
            <person name="Pitluck S."/>
            <person name="Kiss H."/>
            <person name="Brettin T."/>
            <person name="Detter J.C."/>
            <person name="Bruce D."/>
            <person name="Han C."/>
            <person name="Schmutz J."/>
            <person name="Larimer F."/>
            <person name="Land M."/>
            <person name="Hauser L."/>
            <person name="Kyrpides N."/>
            <person name="Mikhailova N."/>
            <person name="Hersman L."/>
            <person name="Dubois J."/>
            <person name="Maurice P."/>
            <person name="Richardson P."/>
        </authorList>
    </citation>
    <scope>NUCLEOTIDE SEQUENCE [LARGE SCALE GENOMIC DNA]</scope>
    <source>
        <strain>ymp</strain>
    </source>
</reference>
<proteinExistence type="inferred from homology"/>
<evidence type="ECO:0000255" key="1">
    <source>
        <dbReference type="HAMAP-Rule" id="MF_00366"/>
    </source>
</evidence>
<gene>
    <name evidence="1" type="primary">rpoZ</name>
    <name type="ordered locus">Pmen_4389</name>
</gene>
<name>RPOZ_ECTM1</name>
<comment type="function">
    <text evidence="1">Promotes RNA polymerase assembly. Latches the N- and C-terminal regions of the beta' subunit thereby facilitating its interaction with the beta and alpha subunits.</text>
</comment>
<comment type="catalytic activity">
    <reaction evidence="1">
        <text>RNA(n) + a ribonucleoside 5'-triphosphate = RNA(n+1) + diphosphate</text>
        <dbReference type="Rhea" id="RHEA:21248"/>
        <dbReference type="Rhea" id="RHEA-COMP:14527"/>
        <dbReference type="Rhea" id="RHEA-COMP:17342"/>
        <dbReference type="ChEBI" id="CHEBI:33019"/>
        <dbReference type="ChEBI" id="CHEBI:61557"/>
        <dbReference type="ChEBI" id="CHEBI:140395"/>
        <dbReference type="EC" id="2.7.7.6"/>
    </reaction>
</comment>
<comment type="subunit">
    <text evidence="1">The RNAP catalytic core consists of 2 alpha, 1 beta, 1 beta' and 1 omega subunit. When a sigma factor is associated with the core the holoenzyme is formed, which can initiate transcription.</text>
</comment>
<comment type="similarity">
    <text evidence="1">Belongs to the RNA polymerase subunit omega family.</text>
</comment>
<protein>
    <recommendedName>
        <fullName evidence="1">DNA-directed RNA polymerase subunit omega</fullName>
        <shortName evidence="1">RNAP omega subunit</shortName>
        <ecNumber evidence="1">2.7.7.6</ecNumber>
    </recommendedName>
    <alternativeName>
        <fullName evidence="1">RNA polymerase omega subunit</fullName>
    </alternativeName>
    <alternativeName>
        <fullName evidence="1">Transcriptase subunit omega</fullName>
    </alternativeName>
</protein>
<sequence length="87" mass="9734">MARVTVEDCLDNVDNRFELVMLATKRSRQLATGGKEPKVAWENDKPTVVALREIAAGLVDYEVVAQEDIVEEEPLFAAFEEEANEPL</sequence>
<feature type="chain" id="PRO_1000005981" description="DNA-directed RNA polymerase subunit omega">
    <location>
        <begin position="1"/>
        <end position="87"/>
    </location>
</feature>